<proteinExistence type="inferred from homology"/>
<name>ACKA_CLOB6</name>
<sequence>MKILVVNCGSSSLKYQLIDMTSEEALAKGLVERIGIEGSILTQKVNGEKYIIEEPMKDHKKAIELVLKALVDKEHGVISDMSEIAAVGHRVVHGGEKYASSVLIDDEVMEALEDCVKLAPLHNPPNIIGINACRELMPKTPMVAVFDTAFHQTLPDYAYMYPLPYELYEQNGIRKYGFHGTSHRYVSSVASEMMGKDLKDLKVITCHLGNGASLCAVKEGKSVETSMGFTPLAGLAMGTRCGDIDPAILLFMERELKMSPDEVDTVINKKSGVLGISGVSSDFRDIEGAAEEGNKRAKLALDVYHYTVRQTIGAYTAVLNGVDAIVFTAGLGENSAASREEILNGLEYLGIKIDAEKNKQRGKQIEISTEDSKVKVFVIPTDEELMIARDTKEITAK</sequence>
<keyword id="KW-0067">ATP-binding</keyword>
<keyword id="KW-0963">Cytoplasm</keyword>
<keyword id="KW-0418">Kinase</keyword>
<keyword id="KW-0460">Magnesium</keyword>
<keyword id="KW-0479">Metal-binding</keyword>
<keyword id="KW-0547">Nucleotide-binding</keyword>
<keyword id="KW-0808">Transferase</keyword>
<comment type="function">
    <text evidence="1">Catalyzes the formation of acetyl phosphate from acetate and ATP. Can also catalyze the reverse reaction.</text>
</comment>
<comment type="catalytic activity">
    <reaction evidence="1">
        <text>acetate + ATP = acetyl phosphate + ADP</text>
        <dbReference type="Rhea" id="RHEA:11352"/>
        <dbReference type="ChEBI" id="CHEBI:22191"/>
        <dbReference type="ChEBI" id="CHEBI:30089"/>
        <dbReference type="ChEBI" id="CHEBI:30616"/>
        <dbReference type="ChEBI" id="CHEBI:456216"/>
        <dbReference type="EC" id="2.7.2.1"/>
    </reaction>
</comment>
<comment type="cofactor">
    <cofactor evidence="1">
        <name>Mg(2+)</name>
        <dbReference type="ChEBI" id="CHEBI:18420"/>
    </cofactor>
    <cofactor evidence="1">
        <name>Mn(2+)</name>
        <dbReference type="ChEBI" id="CHEBI:29035"/>
    </cofactor>
    <text evidence="1">Mg(2+). Can also accept Mn(2+).</text>
</comment>
<comment type="pathway">
    <text evidence="1">Metabolic intermediate biosynthesis; acetyl-CoA biosynthesis; acetyl-CoA from acetate: step 1/2.</text>
</comment>
<comment type="subunit">
    <text evidence="1">Homodimer.</text>
</comment>
<comment type="subcellular location">
    <subcellularLocation>
        <location evidence="1">Cytoplasm</location>
    </subcellularLocation>
</comment>
<comment type="similarity">
    <text evidence="1">Belongs to the acetokinase family.</text>
</comment>
<accession>C3L0F7</accession>
<dbReference type="EC" id="2.7.2.1" evidence="1"/>
<dbReference type="EMBL" id="CP001083">
    <property type="protein sequence ID" value="ACQ53717.1"/>
    <property type="molecule type" value="Genomic_DNA"/>
</dbReference>
<dbReference type="RefSeq" id="WP_003362603.1">
    <property type="nucleotide sequence ID" value="NC_012658.1"/>
</dbReference>
<dbReference type="SMR" id="C3L0F7"/>
<dbReference type="KEGG" id="cbi:CLJ_B2684"/>
<dbReference type="HOGENOM" id="CLU_020352_0_1_9"/>
<dbReference type="UniPathway" id="UPA00340">
    <property type="reaction ID" value="UER00458"/>
</dbReference>
<dbReference type="Proteomes" id="UP000002333">
    <property type="component" value="Chromosome"/>
</dbReference>
<dbReference type="GO" id="GO:0005737">
    <property type="term" value="C:cytoplasm"/>
    <property type="evidence" value="ECO:0007669"/>
    <property type="project" value="UniProtKB-SubCell"/>
</dbReference>
<dbReference type="GO" id="GO:0008776">
    <property type="term" value="F:acetate kinase activity"/>
    <property type="evidence" value="ECO:0007669"/>
    <property type="project" value="UniProtKB-UniRule"/>
</dbReference>
<dbReference type="GO" id="GO:0005524">
    <property type="term" value="F:ATP binding"/>
    <property type="evidence" value="ECO:0007669"/>
    <property type="project" value="UniProtKB-KW"/>
</dbReference>
<dbReference type="GO" id="GO:0000287">
    <property type="term" value="F:magnesium ion binding"/>
    <property type="evidence" value="ECO:0007669"/>
    <property type="project" value="UniProtKB-UniRule"/>
</dbReference>
<dbReference type="GO" id="GO:0006083">
    <property type="term" value="P:acetate metabolic process"/>
    <property type="evidence" value="ECO:0007669"/>
    <property type="project" value="TreeGrafter"/>
</dbReference>
<dbReference type="GO" id="GO:0006085">
    <property type="term" value="P:acetyl-CoA biosynthetic process"/>
    <property type="evidence" value="ECO:0007669"/>
    <property type="project" value="UniProtKB-UniRule"/>
</dbReference>
<dbReference type="CDD" id="cd24010">
    <property type="entry name" value="ASKHA_NBD_AcK_PK"/>
    <property type="match status" value="1"/>
</dbReference>
<dbReference type="Gene3D" id="3.30.420.40">
    <property type="match status" value="2"/>
</dbReference>
<dbReference type="HAMAP" id="MF_00020">
    <property type="entry name" value="Acetate_kinase"/>
    <property type="match status" value="1"/>
</dbReference>
<dbReference type="InterPro" id="IPR004372">
    <property type="entry name" value="Ac/propionate_kinase"/>
</dbReference>
<dbReference type="InterPro" id="IPR000890">
    <property type="entry name" value="Aliphatic_acid_kin_short-chain"/>
</dbReference>
<dbReference type="InterPro" id="IPR023865">
    <property type="entry name" value="Aliphatic_acid_kinase_CS"/>
</dbReference>
<dbReference type="InterPro" id="IPR043129">
    <property type="entry name" value="ATPase_NBD"/>
</dbReference>
<dbReference type="NCBIfam" id="TIGR00016">
    <property type="entry name" value="ackA"/>
    <property type="match status" value="1"/>
</dbReference>
<dbReference type="PANTHER" id="PTHR21060">
    <property type="entry name" value="ACETATE KINASE"/>
    <property type="match status" value="1"/>
</dbReference>
<dbReference type="PANTHER" id="PTHR21060:SF15">
    <property type="entry name" value="ACETATE KINASE-RELATED"/>
    <property type="match status" value="1"/>
</dbReference>
<dbReference type="Pfam" id="PF00871">
    <property type="entry name" value="Acetate_kinase"/>
    <property type="match status" value="1"/>
</dbReference>
<dbReference type="PIRSF" id="PIRSF000722">
    <property type="entry name" value="Acetate_prop_kin"/>
    <property type="match status" value="1"/>
</dbReference>
<dbReference type="PRINTS" id="PR00471">
    <property type="entry name" value="ACETATEKNASE"/>
</dbReference>
<dbReference type="SUPFAM" id="SSF53067">
    <property type="entry name" value="Actin-like ATPase domain"/>
    <property type="match status" value="2"/>
</dbReference>
<dbReference type="PROSITE" id="PS01075">
    <property type="entry name" value="ACETATE_KINASE_1"/>
    <property type="match status" value="1"/>
</dbReference>
<dbReference type="PROSITE" id="PS01076">
    <property type="entry name" value="ACETATE_KINASE_2"/>
    <property type="match status" value="1"/>
</dbReference>
<gene>
    <name evidence="1" type="primary">ackA</name>
    <name type="ordered locus">CLJ_B2684</name>
</gene>
<protein>
    <recommendedName>
        <fullName evidence="1">Acetate kinase</fullName>
        <ecNumber evidence="1">2.7.2.1</ecNumber>
    </recommendedName>
    <alternativeName>
        <fullName evidence="1">Acetokinase</fullName>
    </alternativeName>
</protein>
<organism>
    <name type="scientific">Clostridium botulinum (strain 657 / Type Ba4)</name>
    <dbReference type="NCBI Taxonomy" id="515621"/>
    <lineage>
        <taxon>Bacteria</taxon>
        <taxon>Bacillati</taxon>
        <taxon>Bacillota</taxon>
        <taxon>Clostridia</taxon>
        <taxon>Eubacteriales</taxon>
        <taxon>Clostridiaceae</taxon>
        <taxon>Clostridium</taxon>
    </lineage>
</organism>
<feature type="chain" id="PRO_1000201900" description="Acetate kinase">
    <location>
        <begin position="1"/>
        <end position="397"/>
    </location>
</feature>
<feature type="active site" description="Proton donor/acceptor" evidence="1">
    <location>
        <position position="147"/>
    </location>
</feature>
<feature type="binding site" evidence="1">
    <location>
        <position position="7"/>
    </location>
    <ligand>
        <name>Mg(2+)</name>
        <dbReference type="ChEBI" id="CHEBI:18420"/>
    </ligand>
</feature>
<feature type="binding site" evidence="1">
    <location>
        <position position="14"/>
    </location>
    <ligand>
        <name>ATP</name>
        <dbReference type="ChEBI" id="CHEBI:30616"/>
    </ligand>
</feature>
<feature type="binding site" evidence="1">
    <location>
        <position position="90"/>
    </location>
    <ligand>
        <name>substrate</name>
    </ligand>
</feature>
<feature type="binding site" evidence="1">
    <location>
        <begin position="207"/>
        <end position="211"/>
    </location>
    <ligand>
        <name>ATP</name>
        <dbReference type="ChEBI" id="CHEBI:30616"/>
    </ligand>
</feature>
<feature type="binding site" evidence="1">
    <location>
        <begin position="282"/>
        <end position="284"/>
    </location>
    <ligand>
        <name>ATP</name>
        <dbReference type="ChEBI" id="CHEBI:30616"/>
    </ligand>
</feature>
<feature type="binding site" evidence="1">
    <location>
        <begin position="330"/>
        <end position="334"/>
    </location>
    <ligand>
        <name>ATP</name>
        <dbReference type="ChEBI" id="CHEBI:30616"/>
    </ligand>
</feature>
<feature type="binding site" evidence="1">
    <location>
        <position position="383"/>
    </location>
    <ligand>
        <name>Mg(2+)</name>
        <dbReference type="ChEBI" id="CHEBI:18420"/>
    </ligand>
</feature>
<feature type="site" description="Transition state stabilizer" evidence="1">
    <location>
        <position position="179"/>
    </location>
</feature>
<feature type="site" description="Transition state stabilizer" evidence="1">
    <location>
        <position position="240"/>
    </location>
</feature>
<reference key="1">
    <citation type="submission" date="2008-05" db="EMBL/GenBank/DDBJ databases">
        <title>Genome sequence of Clostridium botulinum Ba4 strain 657.</title>
        <authorList>
            <person name="Shrivastava S."/>
            <person name="Brown J.L."/>
            <person name="Bruce D."/>
            <person name="Detter C."/>
            <person name="Munk C."/>
            <person name="Smith L.A."/>
            <person name="Smith T.J."/>
            <person name="Sutton G."/>
            <person name="Brettin T.S."/>
        </authorList>
    </citation>
    <scope>NUCLEOTIDE SEQUENCE [LARGE SCALE GENOMIC DNA]</scope>
    <source>
        <strain>657 / Type Ba4</strain>
    </source>
</reference>
<evidence type="ECO:0000255" key="1">
    <source>
        <dbReference type="HAMAP-Rule" id="MF_00020"/>
    </source>
</evidence>